<comment type="function">
    <text evidence="1">Involved in control of chromosome replication initiation. Inhibits the cooperative binding of DnaA to the oriC region, thus negatively regulating initiation of chromosome replication. Inhibits the ability of DnaA-ATP to form a helix on DNA; does not disassemble preformed DnaA-DNA helices. Decreases the residence time of DnaA on the chromosome at its binding sites (oriC, replication forks and promoter-binding sites). Tethers DnaA to the replication machinery via the DNA polymerase beta sliding clamp subunit (dnaN). Associates with oriC and other DnaA targets on the chromosome in a DnaA-dependent manner.</text>
</comment>
<comment type="cofactor">
    <cofactor evidence="1">
        <name>Zn(2+)</name>
        <dbReference type="ChEBI" id="CHEBI:29105"/>
    </cofactor>
    <text evidence="1">Binds 1 zinc ion per subunit.</text>
</comment>
<comment type="subunit">
    <text evidence="1">Homotetramer. Interacts with both DnaA and DnaN, acting as a bridge between these two proteins.</text>
</comment>
<comment type="subcellular location">
    <subcellularLocation>
        <location evidence="1">Cytoplasm</location>
        <location evidence="1">Nucleoid</location>
    </subcellularLocation>
    <text evidence="1">Localizes in tight foci, which correspond to the replisome at mid-cell throughout the cell cycle.</text>
</comment>
<comment type="similarity">
    <text evidence="1">Belongs to the YabA family.</text>
</comment>
<accession>Q74KZ4</accession>
<dbReference type="EMBL" id="AE017198">
    <property type="protein sequence ID" value="AAS08421.1"/>
    <property type="molecule type" value="Genomic_DNA"/>
</dbReference>
<dbReference type="RefSeq" id="WP_004895731.1">
    <property type="nucleotide sequence ID" value="NC_005362.1"/>
</dbReference>
<dbReference type="SMR" id="Q74KZ4"/>
<dbReference type="GeneID" id="83569853"/>
<dbReference type="KEGG" id="ljo:LJ_0430"/>
<dbReference type="eggNOG" id="COG4467">
    <property type="taxonomic scope" value="Bacteria"/>
</dbReference>
<dbReference type="HOGENOM" id="CLU_157169_0_1_9"/>
<dbReference type="Proteomes" id="UP000000581">
    <property type="component" value="Chromosome"/>
</dbReference>
<dbReference type="GO" id="GO:0009295">
    <property type="term" value="C:nucleoid"/>
    <property type="evidence" value="ECO:0007669"/>
    <property type="project" value="UniProtKB-SubCell"/>
</dbReference>
<dbReference type="GO" id="GO:0006260">
    <property type="term" value="P:DNA replication"/>
    <property type="evidence" value="ECO:0007669"/>
    <property type="project" value="UniProtKB-UniRule"/>
</dbReference>
<dbReference type="HAMAP" id="MF_01159">
    <property type="entry name" value="YabA"/>
    <property type="match status" value="1"/>
</dbReference>
<dbReference type="InterPro" id="IPR010377">
    <property type="entry name" value="YabA"/>
</dbReference>
<dbReference type="NCBIfam" id="NF009642">
    <property type="entry name" value="PRK13169.1-3"/>
    <property type="match status" value="1"/>
</dbReference>
<dbReference type="Pfam" id="PF06156">
    <property type="entry name" value="YabA"/>
    <property type="match status" value="1"/>
</dbReference>
<dbReference type="PIRSF" id="PIRSF021439">
    <property type="entry name" value="DUF972"/>
    <property type="match status" value="1"/>
</dbReference>
<protein>
    <recommendedName>
        <fullName evidence="1">Replication initiation control protein YabA</fullName>
    </recommendedName>
</protein>
<organism>
    <name type="scientific">Lactobacillus johnsonii (strain CNCM I-12250 / La1 / NCC 533)</name>
    <dbReference type="NCBI Taxonomy" id="257314"/>
    <lineage>
        <taxon>Bacteria</taxon>
        <taxon>Bacillati</taxon>
        <taxon>Bacillota</taxon>
        <taxon>Bacilli</taxon>
        <taxon>Lactobacillales</taxon>
        <taxon>Lactobacillaceae</taxon>
        <taxon>Lactobacillus</taxon>
    </lineage>
</organism>
<sequence length="114" mass="13009">MDPFSQLSQLQHNLQAMTKTVAGLENDMLEVLKENTELKVENQLLREKISKLDANKEPAENKSQAGLKSLRNIYDSGYHICNMYYGSHRESGEDCMFCLDILDNFVNHGQKSRG</sequence>
<proteinExistence type="inferred from homology"/>
<reference key="1">
    <citation type="journal article" date="2004" name="Proc. Natl. Acad. Sci. U.S.A.">
        <title>The genome sequence of the probiotic intestinal bacterium Lactobacillus johnsonii NCC 533.</title>
        <authorList>
            <person name="Pridmore R.D."/>
            <person name="Berger B."/>
            <person name="Desiere F."/>
            <person name="Vilanova D."/>
            <person name="Barretto C."/>
            <person name="Pittet A.-C."/>
            <person name="Zwahlen M.-C."/>
            <person name="Rouvet M."/>
            <person name="Altermann E."/>
            <person name="Barrangou R."/>
            <person name="Mollet B."/>
            <person name="Mercenier A."/>
            <person name="Klaenhammer T."/>
            <person name="Arigoni F."/>
            <person name="Schell M.A."/>
        </authorList>
    </citation>
    <scope>NUCLEOTIDE SEQUENCE [LARGE SCALE GENOMIC DNA]</scope>
    <source>
        <strain>CNCM I-1225 / La1 / NCC 533</strain>
    </source>
</reference>
<keyword id="KW-0963">Cytoplasm</keyword>
<keyword id="KW-0235">DNA replication</keyword>
<keyword id="KW-0236">DNA replication inhibitor</keyword>
<keyword id="KW-0479">Metal-binding</keyword>
<keyword id="KW-0862">Zinc</keyword>
<gene>
    <name evidence="1" type="primary">yabA</name>
    <name type="ordered locus">LJ_0430</name>
</gene>
<name>YABA_LACJO</name>
<feature type="chain" id="PRO_0000211908" description="Replication initiation control protein YabA">
    <location>
        <begin position="1"/>
        <end position="114"/>
    </location>
</feature>
<feature type="binding site" evidence="1">
    <location>
        <position position="79"/>
    </location>
    <ligand>
        <name>Zn(2+)</name>
        <dbReference type="ChEBI" id="CHEBI:29105"/>
    </ligand>
</feature>
<feature type="binding site" evidence="1">
    <location>
        <position position="81"/>
    </location>
    <ligand>
        <name>Zn(2+)</name>
        <dbReference type="ChEBI" id="CHEBI:29105"/>
    </ligand>
</feature>
<feature type="binding site" evidence="1">
    <location>
        <position position="95"/>
    </location>
    <ligand>
        <name>Zn(2+)</name>
        <dbReference type="ChEBI" id="CHEBI:29105"/>
    </ligand>
</feature>
<feature type="binding site" evidence="1">
    <location>
        <position position="98"/>
    </location>
    <ligand>
        <name>Zn(2+)</name>
        <dbReference type="ChEBI" id="CHEBI:29105"/>
    </ligand>
</feature>
<evidence type="ECO:0000255" key="1">
    <source>
        <dbReference type="HAMAP-Rule" id="MF_01159"/>
    </source>
</evidence>